<reference key="1">
    <citation type="journal article" date="2009" name="Genome Res.">
        <title>Newly introduced genomic prophage islands are critical determinants of in vivo competitiveness in the Liverpool epidemic strain of Pseudomonas aeruginosa.</title>
        <authorList>
            <person name="Winstanley C."/>
            <person name="Langille M.G.I."/>
            <person name="Fothergill J.L."/>
            <person name="Kukavica-Ibrulj I."/>
            <person name="Paradis-Bleau C."/>
            <person name="Sanschagrin F."/>
            <person name="Thomson N.R."/>
            <person name="Winsor G.L."/>
            <person name="Quail M.A."/>
            <person name="Lennard N."/>
            <person name="Bignell A."/>
            <person name="Clarke L."/>
            <person name="Seeger K."/>
            <person name="Saunders D."/>
            <person name="Harris D."/>
            <person name="Parkhill J."/>
            <person name="Hancock R.E.W."/>
            <person name="Brinkman F.S.L."/>
            <person name="Levesque R.C."/>
        </authorList>
    </citation>
    <scope>NUCLEOTIDE SEQUENCE [LARGE SCALE GENOMIC DNA]</scope>
    <source>
        <strain>LESB58</strain>
    </source>
</reference>
<sequence length="480" mass="51982">MVKEPNGVTRTMRRIRRIHFVGIGGAGMCGIAEVLLNLGYEVSGSDLKASAVTERLEKFGAQIFIGHQAENADGADVLVVSSAINRANPEVASALERRIPVVPRAEMLAELMRYRHGIAVAGTHGKTTTTSLIASVFAAGGLDPTFVIGGRLNAAGTNAQLGASRYLVAEADESDASFLHLQPMVAVVTNIDADHMATYGGDFNKLKKTFVEFLHNLPFYGLAVMCVDDPVVREILPQIARPTVTYGLSEDADVRAINIRQEGMRTWFTVLRPEREPLDVSVNMPGLHNVLNSLATIVIATDEGISDEAIVQGLSGFQGVGRRFQVYGELQVEGGSVMLVDDYGHHPREVAAVIKAIRGGWPERRLVMVYQPHRYTRTRDLYEDFVQVLGEANVLLLMEVYPAGEEPIPGADSRQLCHSIRQRGQLDPIYFERDADLAPLVKPLLRAGDILLCQGAGDVGGLAPQLIKNPLFAGKGGKGA</sequence>
<accession>B7UZI9</accession>
<keyword id="KW-0067">ATP-binding</keyword>
<keyword id="KW-0131">Cell cycle</keyword>
<keyword id="KW-0132">Cell division</keyword>
<keyword id="KW-0133">Cell shape</keyword>
<keyword id="KW-0961">Cell wall biogenesis/degradation</keyword>
<keyword id="KW-0963">Cytoplasm</keyword>
<keyword id="KW-0436">Ligase</keyword>
<keyword id="KW-0547">Nucleotide-binding</keyword>
<keyword id="KW-0573">Peptidoglycan synthesis</keyword>
<evidence type="ECO:0000255" key="1">
    <source>
        <dbReference type="HAMAP-Rule" id="MF_00046"/>
    </source>
</evidence>
<proteinExistence type="inferred from homology"/>
<organism>
    <name type="scientific">Pseudomonas aeruginosa (strain LESB58)</name>
    <dbReference type="NCBI Taxonomy" id="557722"/>
    <lineage>
        <taxon>Bacteria</taxon>
        <taxon>Pseudomonadati</taxon>
        <taxon>Pseudomonadota</taxon>
        <taxon>Gammaproteobacteria</taxon>
        <taxon>Pseudomonadales</taxon>
        <taxon>Pseudomonadaceae</taxon>
        <taxon>Pseudomonas</taxon>
    </lineage>
</organism>
<name>MURC_PSEA8</name>
<gene>
    <name evidence="1" type="primary">murC</name>
    <name type="ordered locus">PLES_47901</name>
</gene>
<dbReference type="EC" id="6.3.2.8" evidence="1"/>
<dbReference type="EMBL" id="FM209186">
    <property type="protein sequence ID" value="CAW29544.1"/>
    <property type="molecule type" value="Genomic_DNA"/>
</dbReference>
<dbReference type="RefSeq" id="WP_003094121.1">
    <property type="nucleotide sequence ID" value="NC_011770.1"/>
</dbReference>
<dbReference type="SMR" id="B7UZI9"/>
<dbReference type="KEGG" id="pag:PLES_47901"/>
<dbReference type="HOGENOM" id="CLU_028104_2_2_6"/>
<dbReference type="UniPathway" id="UPA00219"/>
<dbReference type="GO" id="GO:0005737">
    <property type="term" value="C:cytoplasm"/>
    <property type="evidence" value="ECO:0007669"/>
    <property type="project" value="UniProtKB-SubCell"/>
</dbReference>
<dbReference type="GO" id="GO:0005524">
    <property type="term" value="F:ATP binding"/>
    <property type="evidence" value="ECO:0007669"/>
    <property type="project" value="UniProtKB-UniRule"/>
</dbReference>
<dbReference type="GO" id="GO:0008763">
    <property type="term" value="F:UDP-N-acetylmuramate-L-alanine ligase activity"/>
    <property type="evidence" value="ECO:0007669"/>
    <property type="project" value="UniProtKB-UniRule"/>
</dbReference>
<dbReference type="GO" id="GO:0051301">
    <property type="term" value="P:cell division"/>
    <property type="evidence" value="ECO:0007669"/>
    <property type="project" value="UniProtKB-KW"/>
</dbReference>
<dbReference type="GO" id="GO:0071555">
    <property type="term" value="P:cell wall organization"/>
    <property type="evidence" value="ECO:0007669"/>
    <property type="project" value="UniProtKB-KW"/>
</dbReference>
<dbReference type="GO" id="GO:0009252">
    <property type="term" value="P:peptidoglycan biosynthetic process"/>
    <property type="evidence" value="ECO:0007669"/>
    <property type="project" value="UniProtKB-UniRule"/>
</dbReference>
<dbReference type="GO" id="GO:0008360">
    <property type="term" value="P:regulation of cell shape"/>
    <property type="evidence" value="ECO:0007669"/>
    <property type="project" value="UniProtKB-KW"/>
</dbReference>
<dbReference type="FunFam" id="3.40.1190.10:FF:000001">
    <property type="entry name" value="UDP-N-acetylmuramate--L-alanine ligase"/>
    <property type="match status" value="1"/>
</dbReference>
<dbReference type="Gene3D" id="3.90.190.20">
    <property type="entry name" value="Mur ligase, C-terminal domain"/>
    <property type="match status" value="1"/>
</dbReference>
<dbReference type="Gene3D" id="3.40.1190.10">
    <property type="entry name" value="Mur-like, catalytic domain"/>
    <property type="match status" value="1"/>
</dbReference>
<dbReference type="Gene3D" id="3.40.50.720">
    <property type="entry name" value="NAD(P)-binding Rossmann-like Domain"/>
    <property type="match status" value="1"/>
</dbReference>
<dbReference type="HAMAP" id="MF_00046">
    <property type="entry name" value="MurC"/>
    <property type="match status" value="1"/>
</dbReference>
<dbReference type="InterPro" id="IPR036565">
    <property type="entry name" value="Mur-like_cat_sf"/>
</dbReference>
<dbReference type="InterPro" id="IPR004101">
    <property type="entry name" value="Mur_ligase_C"/>
</dbReference>
<dbReference type="InterPro" id="IPR036615">
    <property type="entry name" value="Mur_ligase_C_dom_sf"/>
</dbReference>
<dbReference type="InterPro" id="IPR013221">
    <property type="entry name" value="Mur_ligase_cen"/>
</dbReference>
<dbReference type="InterPro" id="IPR000713">
    <property type="entry name" value="Mur_ligase_N"/>
</dbReference>
<dbReference type="InterPro" id="IPR050061">
    <property type="entry name" value="MurCDEF_pg_biosynth"/>
</dbReference>
<dbReference type="InterPro" id="IPR005758">
    <property type="entry name" value="UDP-N-AcMur_Ala_ligase_MurC"/>
</dbReference>
<dbReference type="NCBIfam" id="TIGR01082">
    <property type="entry name" value="murC"/>
    <property type="match status" value="1"/>
</dbReference>
<dbReference type="PANTHER" id="PTHR43445:SF3">
    <property type="entry name" value="UDP-N-ACETYLMURAMATE--L-ALANINE LIGASE"/>
    <property type="match status" value="1"/>
</dbReference>
<dbReference type="PANTHER" id="PTHR43445">
    <property type="entry name" value="UDP-N-ACETYLMURAMATE--L-ALANINE LIGASE-RELATED"/>
    <property type="match status" value="1"/>
</dbReference>
<dbReference type="Pfam" id="PF01225">
    <property type="entry name" value="Mur_ligase"/>
    <property type="match status" value="1"/>
</dbReference>
<dbReference type="Pfam" id="PF02875">
    <property type="entry name" value="Mur_ligase_C"/>
    <property type="match status" value="1"/>
</dbReference>
<dbReference type="Pfam" id="PF08245">
    <property type="entry name" value="Mur_ligase_M"/>
    <property type="match status" value="1"/>
</dbReference>
<dbReference type="SUPFAM" id="SSF51984">
    <property type="entry name" value="MurCD N-terminal domain"/>
    <property type="match status" value="1"/>
</dbReference>
<dbReference type="SUPFAM" id="SSF53623">
    <property type="entry name" value="MurD-like peptide ligases, catalytic domain"/>
    <property type="match status" value="1"/>
</dbReference>
<dbReference type="SUPFAM" id="SSF53244">
    <property type="entry name" value="MurD-like peptide ligases, peptide-binding domain"/>
    <property type="match status" value="1"/>
</dbReference>
<protein>
    <recommendedName>
        <fullName evidence="1">UDP-N-acetylmuramate--L-alanine ligase</fullName>
        <ecNumber evidence="1">6.3.2.8</ecNumber>
    </recommendedName>
    <alternativeName>
        <fullName evidence="1">UDP-N-acetylmuramoyl-L-alanine synthetase</fullName>
    </alternativeName>
</protein>
<comment type="function">
    <text evidence="1">Cell wall formation.</text>
</comment>
<comment type="catalytic activity">
    <reaction evidence="1">
        <text>UDP-N-acetyl-alpha-D-muramate + L-alanine + ATP = UDP-N-acetyl-alpha-D-muramoyl-L-alanine + ADP + phosphate + H(+)</text>
        <dbReference type="Rhea" id="RHEA:23372"/>
        <dbReference type="ChEBI" id="CHEBI:15378"/>
        <dbReference type="ChEBI" id="CHEBI:30616"/>
        <dbReference type="ChEBI" id="CHEBI:43474"/>
        <dbReference type="ChEBI" id="CHEBI:57972"/>
        <dbReference type="ChEBI" id="CHEBI:70757"/>
        <dbReference type="ChEBI" id="CHEBI:83898"/>
        <dbReference type="ChEBI" id="CHEBI:456216"/>
        <dbReference type="EC" id="6.3.2.8"/>
    </reaction>
</comment>
<comment type="pathway">
    <text evidence="1">Cell wall biogenesis; peptidoglycan biosynthesis.</text>
</comment>
<comment type="subcellular location">
    <subcellularLocation>
        <location evidence="1">Cytoplasm</location>
    </subcellularLocation>
</comment>
<comment type="similarity">
    <text evidence="1">Belongs to the MurCDEF family.</text>
</comment>
<feature type="chain" id="PRO_1000116629" description="UDP-N-acetylmuramate--L-alanine ligase">
    <location>
        <begin position="1"/>
        <end position="480"/>
    </location>
</feature>
<feature type="binding site" evidence="1">
    <location>
        <begin position="122"/>
        <end position="128"/>
    </location>
    <ligand>
        <name>ATP</name>
        <dbReference type="ChEBI" id="CHEBI:30616"/>
    </ligand>
</feature>